<protein>
    <recommendedName>
        <fullName evidence="1">Inosine/xanthosine triphosphatase</fullName>
        <shortName evidence="1">ITPase/XTPase</shortName>
        <ecNumber evidence="1">3.6.1.73</ecNumber>
    </recommendedName>
    <alternativeName>
        <fullName evidence="1">Non-canonical purine NTP phosphatase</fullName>
    </alternativeName>
    <alternativeName>
        <fullName evidence="1">Non-standard purine NTP phosphatase</fullName>
    </alternativeName>
    <alternativeName>
        <fullName evidence="1">Nucleoside-triphosphate phosphatase</fullName>
        <shortName evidence="1">NTPase</shortName>
    </alternativeName>
</protein>
<sequence length="179" mass="19525">MQQNIIKVIVGSKNPVKINAAANAMALLFPDYEIQTQGMDAPSGVPAQPMTDSDTRQGAINRVHYCQQQIEADYYFAMEGGVDCFEFGPATFAYIAIAHQARLSIGRGALLPLPMQVYQALEAGEELGHVMDRLFNTVNIKQKGGAIGLLTHGHATRESNYTQAIILAMAPFLNPELYP</sequence>
<accession>A0L0M2</accession>
<organism>
    <name type="scientific">Shewanella sp. (strain ANA-3)</name>
    <dbReference type="NCBI Taxonomy" id="94122"/>
    <lineage>
        <taxon>Bacteria</taxon>
        <taxon>Pseudomonadati</taxon>
        <taxon>Pseudomonadota</taxon>
        <taxon>Gammaproteobacteria</taxon>
        <taxon>Alteromonadales</taxon>
        <taxon>Shewanellaceae</taxon>
        <taxon>Shewanella</taxon>
    </lineage>
</organism>
<reference key="1">
    <citation type="submission" date="2006-09" db="EMBL/GenBank/DDBJ databases">
        <title>Complete sequence of chromosome 1 of Shewanella sp. ANA-3.</title>
        <authorList>
            <person name="Copeland A."/>
            <person name="Lucas S."/>
            <person name="Lapidus A."/>
            <person name="Barry K."/>
            <person name="Detter J.C."/>
            <person name="Glavina del Rio T."/>
            <person name="Hammon N."/>
            <person name="Israni S."/>
            <person name="Dalin E."/>
            <person name="Tice H."/>
            <person name="Pitluck S."/>
            <person name="Chertkov O."/>
            <person name="Brettin T."/>
            <person name="Bruce D."/>
            <person name="Han C."/>
            <person name="Tapia R."/>
            <person name="Gilna P."/>
            <person name="Schmutz J."/>
            <person name="Larimer F."/>
            <person name="Land M."/>
            <person name="Hauser L."/>
            <person name="Kyrpides N."/>
            <person name="Kim E."/>
            <person name="Newman D."/>
            <person name="Salticov C."/>
            <person name="Konstantinidis K."/>
            <person name="Klappenback J."/>
            <person name="Tiedje J."/>
            <person name="Richardson P."/>
        </authorList>
    </citation>
    <scope>NUCLEOTIDE SEQUENCE [LARGE SCALE GENOMIC DNA]</scope>
    <source>
        <strain>ANA-3</strain>
    </source>
</reference>
<keyword id="KW-0378">Hydrolase</keyword>
<keyword id="KW-0460">Magnesium</keyword>
<keyword id="KW-0464">Manganese</keyword>
<keyword id="KW-0479">Metal-binding</keyword>
<keyword id="KW-0546">Nucleotide metabolism</keyword>
<keyword id="KW-0547">Nucleotide-binding</keyword>
<gene>
    <name type="ordered locus">Shewana3_3367</name>
</gene>
<evidence type="ECO:0000255" key="1">
    <source>
        <dbReference type="HAMAP-Rule" id="MF_00648"/>
    </source>
</evidence>
<name>NCPP_SHESA</name>
<comment type="function">
    <text evidence="1">Phosphatase that hydrolyzes non-canonical purine nucleotides such as XTP and ITP to their respective diphosphate derivatives. Probably excludes non-canonical purines from DNA/RNA precursor pool, thus preventing their incorporation into DNA/RNA and avoiding chromosomal lesions.</text>
</comment>
<comment type="catalytic activity">
    <reaction evidence="1">
        <text>XTP + H2O = XDP + phosphate + H(+)</text>
        <dbReference type="Rhea" id="RHEA:28406"/>
        <dbReference type="ChEBI" id="CHEBI:15377"/>
        <dbReference type="ChEBI" id="CHEBI:15378"/>
        <dbReference type="ChEBI" id="CHEBI:43474"/>
        <dbReference type="ChEBI" id="CHEBI:59884"/>
        <dbReference type="ChEBI" id="CHEBI:61314"/>
        <dbReference type="EC" id="3.6.1.73"/>
    </reaction>
</comment>
<comment type="catalytic activity">
    <reaction evidence="1">
        <text>ITP + H2O = IDP + phosphate + H(+)</text>
        <dbReference type="Rhea" id="RHEA:28330"/>
        <dbReference type="ChEBI" id="CHEBI:15377"/>
        <dbReference type="ChEBI" id="CHEBI:15378"/>
        <dbReference type="ChEBI" id="CHEBI:43474"/>
        <dbReference type="ChEBI" id="CHEBI:58280"/>
        <dbReference type="ChEBI" id="CHEBI:61402"/>
        <dbReference type="EC" id="3.6.1.73"/>
    </reaction>
</comment>
<comment type="cofactor">
    <cofactor evidence="1">
        <name>Mg(2+)</name>
        <dbReference type="ChEBI" id="CHEBI:18420"/>
    </cofactor>
    <cofactor evidence="1">
        <name>Mn(2+)</name>
        <dbReference type="ChEBI" id="CHEBI:29035"/>
    </cofactor>
    <text evidence="1">Binds 1 divalent metal cation per subunit; can use either Mg(2+) or Mn(2+).</text>
</comment>
<comment type="subunit">
    <text evidence="1">Homodimer.</text>
</comment>
<comment type="similarity">
    <text evidence="1">Belongs to the YjjX NTPase family.</text>
</comment>
<dbReference type="EC" id="3.6.1.73" evidence="1"/>
<dbReference type="EMBL" id="CP000469">
    <property type="protein sequence ID" value="ABK49591.1"/>
    <property type="molecule type" value="Genomic_DNA"/>
</dbReference>
<dbReference type="RefSeq" id="WP_011718167.1">
    <property type="nucleotide sequence ID" value="NC_008577.1"/>
</dbReference>
<dbReference type="SMR" id="A0L0M2"/>
<dbReference type="STRING" id="94122.Shewana3_3367"/>
<dbReference type="KEGG" id="shn:Shewana3_3367"/>
<dbReference type="eggNOG" id="COG1986">
    <property type="taxonomic scope" value="Bacteria"/>
</dbReference>
<dbReference type="HOGENOM" id="CLU_087417_1_0_6"/>
<dbReference type="OrthoDB" id="6334099at2"/>
<dbReference type="Proteomes" id="UP000002589">
    <property type="component" value="Chromosome"/>
</dbReference>
<dbReference type="GO" id="GO:0103023">
    <property type="term" value="F:ITPase activity"/>
    <property type="evidence" value="ECO:0007669"/>
    <property type="project" value="UniProtKB-EC"/>
</dbReference>
<dbReference type="GO" id="GO:0046872">
    <property type="term" value="F:metal ion binding"/>
    <property type="evidence" value="ECO:0007669"/>
    <property type="project" value="UniProtKB-KW"/>
</dbReference>
<dbReference type="GO" id="GO:0000166">
    <property type="term" value="F:nucleotide binding"/>
    <property type="evidence" value="ECO:0007669"/>
    <property type="project" value="UniProtKB-KW"/>
</dbReference>
<dbReference type="GO" id="GO:0017111">
    <property type="term" value="F:ribonucleoside triphosphate phosphatase activity"/>
    <property type="evidence" value="ECO:0000250"/>
    <property type="project" value="UniProtKB"/>
</dbReference>
<dbReference type="GO" id="GO:0009117">
    <property type="term" value="P:nucleotide metabolic process"/>
    <property type="evidence" value="ECO:0007669"/>
    <property type="project" value="UniProtKB-KW"/>
</dbReference>
<dbReference type="GO" id="GO:0006772">
    <property type="term" value="P:thiamine metabolic process"/>
    <property type="evidence" value="ECO:0007669"/>
    <property type="project" value="TreeGrafter"/>
</dbReference>
<dbReference type="FunFam" id="3.90.950.10:FF:000002">
    <property type="entry name" value="Inosine/xanthosine triphosphatase"/>
    <property type="match status" value="1"/>
</dbReference>
<dbReference type="Gene3D" id="3.90.950.10">
    <property type="match status" value="1"/>
</dbReference>
<dbReference type="HAMAP" id="MF_00648">
    <property type="entry name" value="Non_canon_purine_NTPase_YjjX"/>
    <property type="match status" value="1"/>
</dbReference>
<dbReference type="InterPro" id="IPR029001">
    <property type="entry name" value="ITPase-like_fam"/>
</dbReference>
<dbReference type="InterPro" id="IPR002786">
    <property type="entry name" value="Non_canon_purine_NTPase"/>
</dbReference>
<dbReference type="InterPro" id="IPR026533">
    <property type="entry name" value="NTPase/PRRC1"/>
</dbReference>
<dbReference type="InterPro" id="IPR050299">
    <property type="entry name" value="YjjX_NTPase"/>
</dbReference>
<dbReference type="NCBIfam" id="TIGR00258">
    <property type="entry name" value="inosine/xanthosine triphosphatase"/>
    <property type="match status" value="1"/>
</dbReference>
<dbReference type="NCBIfam" id="NF003459">
    <property type="entry name" value="PRK05074.1"/>
    <property type="match status" value="1"/>
</dbReference>
<dbReference type="PANTHER" id="PTHR34699">
    <property type="match status" value="1"/>
</dbReference>
<dbReference type="PANTHER" id="PTHR34699:SF2">
    <property type="entry name" value="NON-CANONICAL PURINE NTP PHOSPHATASE_PRRC1 DOMAIN-CONTAINING PROTEIN"/>
    <property type="match status" value="1"/>
</dbReference>
<dbReference type="Pfam" id="PF01931">
    <property type="entry name" value="NTPase_I-T"/>
    <property type="match status" value="1"/>
</dbReference>
<dbReference type="SUPFAM" id="SSF52972">
    <property type="entry name" value="ITPase-like"/>
    <property type="match status" value="1"/>
</dbReference>
<feature type="chain" id="PRO_1000056958" description="Inosine/xanthosine triphosphatase">
    <location>
        <begin position="1"/>
        <end position="179"/>
    </location>
</feature>
<feature type="binding site" evidence="1">
    <location>
        <begin position="71"/>
        <end position="72"/>
    </location>
    <ligand>
        <name>substrate</name>
    </ligand>
</feature>
<feature type="binding site" evidence="1">
    <location>
        <position position="71"/>
    </location>
    <ligand>
        <name>Mg(2+)</name>
        <dbReference type="ChEBI" id="CHEBI:18420"/>
    </ligand>
</feature>
<proteinExistence type="inferred from homology"/>